<proteinExistence type="inferred from homology"/>
<protein>
    <recommendedName>
        <fullName evidence="1">GTP cyclohydrolase FolE2</fullName>
        <ecNumber evidence="1">3.5.4.16</ecNumber>
    </recommendedName>
</protein>
<organism>
    <name type="scientific">Burkholderia multivorans (strain ATCC 17616 / 249)</name>
    <dbReference type="NCBI Taxonomy" id="395019"/>
    <lineage>
        <taxon>Bacteria</taxon>
        <taxon>Pseudomonadati</taxon>
        <taxon>Pseudomonadota</taxon>
        <taxon>Betaproteobacteria</taxon>
        <taxon>Burkholderiales</taxon>
        <taxon>Burkholderiaceae</taxon>
        <taxon>Burkholderia</taxon>
        <taxon>Burkholderia cepacia complex</taxon>
    </lineage>
</organism>
<reference key="1">
    <citation type="submission" date="2007-10" db="EMBL/GenBank/DDBJ databases">
        <title>Complete sequence of chromosome 2 of Burkholderia multivorans ATCC 17616.</title>
        <authorList>
            <person name="Copeland A."/>
            <person name="Lucas S."/>
            <person name="Lapidus A."/>
            <person name="Barry K."/>
            <person name="Glavina del Rio T."/>
            <person name="Dalin E."/>
            <person name="Tice H."/>
            <person name="Pitluck S."/>
            <person name="Chain P."/>
            <person name="Malfatti S."/>
            <person name="Shin M."/>
            <person name="Vergez L."/>
            <person name="Schmutz J."/>
            <person name="Larimer F."/>
            <person name="Land M."/>
            <person name="Hauser L."/>
            <person name="Kyrpides N."/>
            <person name="Kim E."/>
            <person name="Tiedje J."/>
            <person name="Richardson P."/>
        </authorList>
    </citation>
    <scope>NUCLEOTIDE SEQUENCE [LARGE SCALE GENOMIC DNA]</scope>
    <source>
        <strain>ATCC 17616 / 249</strain>
    </source>
</reference>
<reference key="2">
    <citation type="submission" date="2007-04" db="EMBL/GenBank/DDBJ databases">
        <title>Complete genome sequence of Burkholderia multivorans ATCC 17616.</title>
        <authorList>
            <person name="Ohtsubo Y."/>
            <person name="Yamashita A."/>
            <person name="Kurokawa K."/>
            <person name="Takami H."/>
            <person name="Yuhara S."/>
            <person name="Nishiyama E."/>
            <person name="Endo R."/>
            <person name="Miyazaki R."/>
            <person name="Ono A."/>
            <person name="Yano K."/>
            <person name="Ito M."/>
            <person name="Sota M."/>
            <person name="Yuji N."/>
            <person name="Hattori M."/>
            <person name="Tsuda M."/>
        </authorList>
    </citation>
    <scope>NUCLEOTIDE SEQUENCE [LARGE SCALE GENOMIC DNA]</scope>
    <source>
        <strain>ATCC 17616 / 249</strain>
    </source>
</reference>
<evidence type="ECO:0000255" key="1">
    <source>
        <dbReference type="HAMAP-Rule" id="MF_01527"/>
    </source>
</evidence>
<name>GCH4_BURM1</name>
<accession>A9ANA1</accession>
<comment type="function">
    <text evidence="1">Converts GTP to 7,8-dihydroneopterin triphosphate.</text>
</comment>
<comment type="catalytic activity">
    <reaction evidence="1">
        <text>GTP + H2O = 7,8-dihydroneopterin 3'-triphosphate + formate + H(+)</text>
        <dbReference type="Rhea" id="RHEA:17473"/>
        <dbReference type="ChEBI" id="CHEBI:15377"/>
        <dbReference type="ChEBI" id="CHEBI:15378"/>
        <dbReference type="ChEBI" id="CHEBI:15740"/>
        <dbReference type="ChEBI" id="CHEBI:37565"/>
        <dbReference type="ChEBI" id="CHEBI:58462"/>
        <dbReference type="EC" id="3.5.4.16"/>
    </reaction>
</comment>
<comment type="pathway">
    <text evidence="1">Cofactor biosynthesis; 7,8-dihydroneopterin triphosphate biosynthesis; 7,8-dihydroneopterin triphosphate from GTP: step 1/1.</text>
</comment>
<comment type="similarity">
    <text evidence="1">Belongs to the GTP cyclohydrolase IV family.</text>
</comment>
<sequence>MNQMNPAFVMPDVQSTVDTRQIPIQRVGVKAVRHPLTVLTESGDVQPTVGVWNLDVRLPAEQKGTHMSRFVALLEENRAPLTIERFRAMIASMLEKLEAEAGRIEVTFPYFVNKTAPVSGVQSLLDYEVTLAGESRNGDTRLFLKVLVPVTSLCPCSKKISQYGAHNQRSHVTIDAELAADVPVEALIRIAEEEASCELWGLLKRPDEKFVTERAYENPKFVEDLVRDVAARLDADARIVAYVLEAENFESIHNHSAYALIERDKRHAA</sequence>
<feature type="chain" id="PRO_0000372024" description="GTP cyclohydrolase FolE2">
    <location>
        <begin position="1"/>
        <end position="269"/>
    </location>
</feature>
<feature type="site" description="May be catalytically important" evidence="1">
    <location>
        <position position="154"/>
    </location>
</feature>
<dbReference type="EC" id="3.5.4.16" evidence="1"/>
<dbReference type="EMBL" id="CP000869">
    <property type="protein sequence ID" value="ABX18490.1"/>
    <property type="molecule type" value="Genomic_DNA"/>
</dbReference>
<dbReference type="EMBL" id="AP009386">
    <property type="protein sequence ID" value="BAG45569.1"/>
    <property type="molecule type" value="Genomic_DNA"/>
</dbReference>
<dbReference type="RefSeq" id="WP_012217400.1">
    <property type="nucleotide sequence ID" value="NC_010805.1"/>
</dbReference>
<dbReference type="SMR" id="A9ANA1"/>
<dbReference type="STRING" id="395019.BMULJ_03697"/>
<dbReference type="KEGG" id="bmj:BMULJ_03697"/>
<dbReference type="KEGG" id="bmu:Bmul_4819"/>
<dbReference type="eggNOG" id="COG1469">
    <property type="taxonomic scope" value="Bacteria"/>
</dbReference>
<dbReference type="HOGENOM" id="CLU_062816_1_1_4"/>
<dbReference type="UniPathway" id="UPA00848">
    <property type="reaction ID" value="UER00151"/>
</dbReference>
<dbReference type="Proteomes" id="UP000008815">
    <property type="component" value="Chromosome 2"/>
</dbReference>
<dbReference type="GO" id="GO:0003934">
    <property type="term" value="F:GTP cyclohydrolase I activity"/>
    <property type="evidence" value="ECO:0007669"/>
    <property type="project" value="UniProtKB-UniRule"/>
</dbReference>
<dbReference type="GO" id="GO:0046654">
    <property type="term" value="P:tetrahydrofolate biosynthetic process"/>
    <property type="evidence" value="ECO:0007669"/>
    <property type="project" value="UniProtKB-UniRule"/>
</dbReference>
<dbReference type="Gene3D" id="3.10.270.10">
    <property type="entry name" value="Urate Oxidase"/>
    <property type="match status" value="1"/>
</dbReference>
<dbReference type="HAMAP" id="MF_01527_B">
    <property type="entry name" value="GTP_cyclohydrol_B"/>
    <property type="match status" value="1"/>
</dbReference>
<dbReference type="InterPro" id="IPR022838">
    <property type="entry name" value="GTP_cyclohydrolase_FolE2"/>
</dbReference>
<dbReference type="InterPro" id="IPR003801">
    <property type="entry name" value="GTP_cyclohydrolase_FolE2/MptA"/>
</dbReference>
<dbReference type="NCBIfam" id="NF010200">
    <property type="entry name" value="PRK13674.1-1"/>
    <property type="match status" value="1"/>
</dbReference>
<dbReference type="PANTHER" id="PTHR36445">
    <property type="entry name" value="GTP CYCLOHYDROLASE MPTA"/>
    <property type="match status" value="1"/>
</dbReference>
<dbReference type="PANTHER" id="PTHR36445:SF1">
    <property type="entry name" value="GTP CYCLOHYDROLASE MPTA"/>
    <property type="match status" value="1"/>
</dbReference>
<dbReference type="Pfam" id="PF02649">
    <property type="entry name" value="GCHY-1"/>
    <property type="match status" value="1"/>
</dbReference>
<keyword id="KW-0378">Hydrolase</keyword>
<keyword id="KW-1185">Reference proteome</keyword>
<gene>
    <name evidence="1" type="primary">folE2</name>
    <name type="ordered locus">Bmul_4819</name>
    <name type="ordered locus">BMULJ_03697</name>
</gene>